<sequence length="204" mass="23993">MGAYKYMQELWRKKQSDVMRFLLRVRCWQYRQLSALHRAPRPTRPDKARRLGYKAKQGYVIYRIRVRRGGRKRPVPKGATYGKPVHHGVNQIKFARSLQSVAEERAGRHCGGLRVLSSYWVGEDSTYKFFEVVLVDTFHKAIRRNPDTQWITKAVHKHREMRGLTSAGKKSRGLGKGHKFHLTIGGSRRAAWKRRNTLQLHRYR</sequence>
<comment type="function">
    <text evidence="2">Component of the large ribosomal subunit. The ribosome is a large ribonucleoprotein complex responsible for the synthesis of proteins in the cell.</text>
</comment>
<comment type="subunit">
    <text evidence="2">Component of the large ribosomal subunit.</text>
</comment>
<comment type="subcellular location">
    <subcellularLocation>
        <location evidence="2">Cytoplasm</location>
    </subcellularLocation>
</comment>
<comment type="similarity">
    <text evidence="3">Belongs to the eukaryotic ribosomal protein eL15 family.</text>
</comment>
<proteinExistence type="evidence at transcript level"/>
<organism>
    <name type="scientific">Carassius auratus</name>
    <name type="common">Goldfish</name>
    <dbReference type="NCBI Taxonomy" id="7957"/>
    <lineage>
        <taxon>Eukaryota</taxon>
        <taxon>Metazoa</taxon>
        <taxon>Chordata</taxon>
        <taxon>Craniata</taxon>
        <taxon>Vertebrata</taxon>
        <taxon>Euteleostomi</taxon>
        <taxon>Actinopterygii</taxon>
        <taxon>Neopterygii</taxon>
        <taxon>Teleostei</taxon>
        <taxon>Ostariophysi</taxon>
        <taxon>Cypriniformes</taxon>
        <taxon>Cyprinidae</taxon>
        <taxon>Cyprininae</taxon>
        <taxon>Carassius</taxon>
    </lineage>
</organism>
<name>RL15_CARAU</name>
<keyword id="KW-0963">Cytoplasm</keyword>
<keyword id="KW-1185">Reference proteome</keyword>
<keyword id="KW-0687">Ribonucleoprotein</keyword>
<keyword id="KW-0689">Ribosomal protein</keyword>
<feature type="initiator methionine" description="Removed" evidence="1">
    <location>
        <position position="1"/>
    </location>
</feature>
<feature type="chain" id="PRO_0000127535" description="Large ribosomal subunit protein eL15">
    <location>
        <begin position="2"/>
        <end position="204"/>
    </location>
</feature>
<gene>
    <name type="primary">rpl15</name>
</gene>
<accession>Q7T3N9</accession>
<dbReference type="EMBL" id="AY249413">
    <property type="protein sequence ID" value="AAP35250.1"/>
    <property type="molecule type" value="mRNA"/>
</dbReference>
<dbReference type="SMR" id="Q7T3N9"/>
<dbReference type="OrthoDB" id="10255148at2759"/>
<dbReference type="Proteomes" id="UP000515129">
    <property type="component" value="Unplaced"/>
</dbReference>
<dbReference type="GO" id="GO:0022625">
    <property type="term" value="C:cytosolic large ribosomal subunit"/>
    <property type="evidence" value="ECO:0007669"/>
    <property type="project" value="TreeGrafter"/>
</dbReference>
<dbReference type="GO" id="GO:0003723">
    <property type="term" value="F:RNA binding"/>
    <property type="evidence" value="ECO:0007669"/>
    <property type="project" value="TreeGrafter"/>
</dbReference>
<dbReference type="GO" id="GO:0003735">
    <property type="term" value="F:structural constituent of ribosome"/>
    <property type="evidence" value="ECO:0007669"/>
    <property type="project" value="InterPro"/>
</dbReference>
<dbReference type="GO" id="GO:0002181">
    <property type="term" value="P:cytoplasmic translation"/>
    <property type="evidence" value="ECO:0007669"/>
    <property type="project" value="TreeGrafter"/>
</dbReference>
<dbReference type="FunFam" id="3.40.1120.10:FF:000001">
    <property type="entry name" value="Ribosomal protein L15"/>
    <property type="match status" value="1"/>
</dbReference>
<dbReference type="Gene3D" id="3.40.1120.10">
    <property type="entry name" value="Ribosomal protein l15e"/>
    <property type="match status" value="1"/>
</dbReference>
<dbReference type="InterPro" id="IPR024794">
    <property type="entry name" value="Rbsml_eL15_core_dom_sf"/>
</dbReference>
<dbReference type="InterPro" id="IPR000439">
    <property type="entry name" value="Ribosomal_eL15"/>
</dbReference>
<dbReference type="InterPro" id="IPR020925">
    <property type="entry name" value="Ribosomal_eL15_CS"/>
</dbReference>
<dbReference type="InterPro" id="IPR012678">
    <property type="entry name" value="Ribosomal_uL23/eL15/eS24_sf"/>
</dbReference>
<dbReference type="NCBIfam" id="NF003269">
    <property type="entry name" value="PRK04243.1"/>
    <property type="match status" value="1"/>
</dbReference>
<dbReference type="PANTHER" id="PTHR11847:SF4">
    <property type="entry name" value="LARGE RIBOSOMAL SUBUNIT PROTEIN EL15"/>
    <property type="match status" value="1"/>
</dbReference>
<dbReference type="PANTHER" id="PTHR11847">
    <property type="entry name" value="RIBOSOMAL PROTEIN L15"/>
    <property type="match status" value="1"/>
</dbReference>
<dbReference type="Pfam" id="PF00827">
    <property type="entry name" value="Ribosomal_L15e"/>
    <property type="match status" value="1"/>
</dbReference>
<dbReference type="SMART" id="SM01384">
    <property type="entry name" value="Ribosomal_L15e"/>
    <property type="match status" value="1"/>
</dbReference>
<dbReference type="SUPFAM" id="SSF54189">
    <property type="entry name" value="Ribosomal proteins S24e, L23 and L15e"/>
    <property type="match status" value="1"/>
</dbReference>
<dbReference type="PROSITE" id="PS01194">
    <property type="entry name" value="RIBOSOMAL_L15E"/>
    <property type="match status" value="1"/>
</dbReference>
<protein>
    <recommendedName>
        <fullName evidence="3">Large ribosomal subunit protein eL15</fullName>
    </recommendedName>
    <alternativeName>
        <fullName>60S ribosomal protein L15</fullName>
    </alternativeName>
</protein>
<evidence type="ECO:0000250" key="1"/>
<evidence type="ECO:0000250" key="2">
    <source>
        <dbReference type="UniProtKB" id="P61313"/>
    </source>
</evidence>
<evidence type="ECO:0000305" key="3"/>
<reference key="1">
    <citation type="submission" date="2003-03" db="EMBL/GenBank/DDBJ databases">
        <title>Evaluating the potential of ribosomal protein L15 as a novel marker for phylogenetic analysis: a comparative analysis of 15 teleost RPL15 cDNAs.</title>
        <authorList>
            <person name="Song P."/>
            <person name="Zhang J."/>
            <person name="Xiang Z."/>
        </authorList>
    </citation>
    <scope>NUCLEOTIDE SEQUENCE [MRNA]</scope>
    <source>
        <tissue>Liver</tissue>
    </source>
</reference>